<evidence type="ECO:0000255" key="1">
    <source>
        <dbReference type="HAMAP-Rule" id="MF_01021"/>
    </source>
</evidence>
<comment type="function">
    <text evidence="1">Catalyzes the hydrolysis of the adenine ring of phosphoribosyl-AMP.</text>
</comment>
<comment type="catalytic activity">
    <reaction evidence="1">
        <text>1-(5-phospho-beta-D-ribosyl)-5'-AMP + H2O = 1-(5-phospho-beta-D-ribosyl)-5-[(5-phospho-beta-D-ribosylamino)methylideneamino]imidazole-4-carboxamide</text>
        <dbReference type="Rhea" id="RHEA:20049"/>
        <dbReference type="ChEBI" id="CHEBI:15377"/>
        <dbReference type="ChEBI" id="CHEBI:58435"/>
        <dbReference type="ChEBI" id="CHEBI:59457"/>
        <dbReference type="EC" id="3.5.4.19"/>
    </reaction>
</comment>
<comment type="cofactor">
    <cofactor evidence="1">
        <name>Mg(2+)</name>
        <dbReference type="ChEBI" id="CHEBI:18420"/>
    </cofactor>
    <text evidence="1">Binds 1 Mg(2+) ion per subunit.</text>
</comment>
<comment type="cofactor">
    <cofactor evidence="1">
        <name>Zn(2+)</name>
        <dbReference type="ChEBI" id="CHEBI:29105"/>
    </cofactor>
    <text evidence="1">Binds 1 zinc ion per subunit.</text>
</comment>
<comment type="pathway">
    <text evidence="1">Amino-acid biosynthesis; L-histidine biosynthesis; L-histidine from 5-phospho-alpha-D-ribose 1-diphosphate: step 3/9.</text>
</comment>
<comment type="subunit">
    <text evidence="1">Homodimer.</text>
</comment>
<comment type="subcellular location">
    <subcellularLocation>
        <location evidence="1">Cytoplasm</location>
    </subcellularLocation>
</comment>
<comment type="similarity">
    <text evidence="1">Belongs to the PRA-CH family.</text>
</comment>
<feature type="chain" id="PRO_0000319693" description="Phosphoribosyl-AMP cyclohydrolase">
    <location>
        <begin position="1"/>
        <end position="134"/>
    </location>
</feature>
<feature type="binding site" evidence="1">
    <location>
        <position position="80"/>
    </location>
    <ligand>
        <name>Mg(2+)</name>
        <dbReference type="ChEBI" id="CHEBI:18420"/>
    </ligand>
</feature>
<feature type="binding site" evidence="1">
    <location>
        <position position="81"/>
    </location>
    <ligand>
        <name>Zn(2+)</name>
        <dbReference type="ChEBI" id="CHEBI:29105"/>
        <note>ligand shared between dimeric partners</note>
    </ligand>
</feature>
<feature type="binding site" evidence="1">
    <location>
        <position position="82"/>
    </location>
    <ligand>
        <name>Mg(2+)</name>
        <dbReference type="ChEBI" id="CHEBI:18420"/>
    </ligand>
</feature>
<feature type="binding site" evidence="1">
    <location>
        <position position="84"/>
    </location>
    <ligand>
        <name>Mg(2+)</name>
        <dbReference type="ChEBI" id="CHEBI:18420"/>
    </ligand>
</feature>
<feature type="binding site" evidence="1">
    <location>
        <position position="98"/>
    </location>
    <ligand>
        <name>Zn(2+)</name>
        <dbReference type="ChEBI" id="CHEBI:29105"/>
        <note>ligand shared between dimeric partners</note>
    </ligand>
</feature>
<feature type="binding site" evidence="1">
    <location>
        <position position="105"/>
    </location>
    <ligand>
        <name>Zn(2+)</name>
        <dbReference type="ChEBI" id="CHEBI:29105"/>
        <note>ligand shared between dimeric partners</note>
    </ligand>
</feature>
<name>HIS3_JANMA</name>
<dbReference type="EC" id="3.5.4.19" evidence="1"/>
<dbReference type="EMBL" id="CP000269">
    <property type="protein sequence ID" value="ABR88892.1"/>
    <property type="molecule type" value="Genomic_DNA"/>
</dbReference>
<dbReference type="RefSeq" id="WP_012081125.1">
    <property type="nucleotide sequence ID" value="NC_009659.1"/>
</dbReference>
<dbReference type="SMR" id="A6T375"/>
<dbReference type="STRING" id="375286.mma_3282"/>
<dbReference type="KEGG" id="mms:mma_3282"/>
<dbReference type="eggNOG" id="COG0139">
    <property type="taxonomic scope" value="Bacteria"/>
</dbReference>
<dbReference type="HOGENOM" id="CLU_048577_5_0_4"/>
<dbReference type="OrthoDB" id="9795769at2"/>
<dbReference type="UniPathway" id="UPA00031">
    <property type="reaction ID" value="UER00008"/>
</dbReference>
<dbReference type="Proteomes" id="UP000006388">
    <property type="component" value="Chromosome"/>
</dbReference>
<dbReference type="GO" id="GO:0005737">
    <property type="term" value="C:cytoplasm"/>
    <property type="evidence" value="ECO:0007669"/>
    <property type="project" value="UniProtKB-SubCell"/>
</dbReference>
<dbReference type="GO" id="GO:0000287">
    <property type="term" value="F:magnesium ion binding"/>
    <property type="evidence" value="ECO:0007669"/>
    <property type="project" value="UniProtKB-UniRule"/>
</dbReference>
<dbReference type="GO" id="GO:0004635">
    <property type="term" value="F:phosphoribosyl-AMP cyclohydrolase activity"/>
    <property type="evidence" value="ECO:0007669"/>
    <property type="project" value="UniProtKB-UniRule"/>
</dbReference>
<dbReference type="GO" id="GO:0008270">
    <property type="term" value="F:zinc ion binding"/>
    <property type="evidence" value="ECO:0007669"/>
    <property type="project" value="UniProtKB-UniRule"/>
</dbReference>
<dbReference type="GO" id="GO:0000105">
    <property type="term" value="P:L-histidine biosynthetic process"/>
    <property type="evidence" value="ECO:0007669"/>
    <property type="project" value="UniProtKB-UniRule"/>
</dbReference>
<dbReference type="FunFam" id="3.10.20.810:FF:000001">
    <property type="entry name" value="Histidine biosynthesis bifunctional protein HisIE"/>
    <property type="match status" value="1"/>
</dbReference>
<dbReference type="Gene3D" id="3.10.20.810">
    <property type="entry name" value="Phosphoribosyl-AMP cyclohydrolase"/>
    <property type="match status" value="1"/>
</dbReference>
<dbReference type="HAMAP" id="MF_01021">
    <property type="entry name" value="HisI"/>
    <property type="match status" value="1"/>
</dbReference>
<dbReference type="InterPro" id="IPR026660">
    <property type="entry name" value="PRA-CH"/>
</dbReference>
<dbReference type="InterPro" id="IPR002496">
    <property type="entry name" value="PRib_AMP_CycHydrolase_dom"/>
</dbReference>
<dbReference type="InterPro" id="IPR038019">
    <property type="entry name" value="PRib_AMP_CycHydrolase_sf"/>
</dbReference>
<dbReference type="NCBIfam" id="NF000768">
    <property type="entry name" value="PRK00051.1"/>
    <property type="match status" value="1"/>
</dbReference>
<dbReference type="PANTHER" id="PTHR42945">
    <property type="entry name" value="HISTIDINE BIOSYNTHESIS BIFUNCTIONAL PROTEIN"/>
    <property type="match status" value="1"/>
</dbReference>
<dbReference type="PANTHER" id="PTHR42945:SF1">
    <property type="entry name" value="HISTIDINE BIOSYNTHESIS BIFUNCTIONAL PROTEIN HIS7"/>
    <property type="match status" value="1"/>
</dbReference>
<dbReference type="Pfam" id="PF01502">
    <property type="entry name" value="PRA-CH"/>
    <property type="match status" value="1"/>
</dbReference>
<dbReference type="SUPFAM" id="SSF141734">
    <property type="entry name" value="HisI-like"/>
    <property type="match status" value="1"/>
</dbReference>
<proteinExistence type="inferred from homology"/>
<keyword id="KW-0028">Amino-acid biosynthesis</keyword>
<keyword id="KW-0963">Cytoplasm</keyword>
<keyword id="KW-0368">Histidine biosynthesis</keyword>
<keyword id="KW-0378">Hydrolase</keyword>
<keyword id="KW-0460">Magnesium</keyword>
<keyword id="KW-0479">Metal-binding</keyword>
<keyword id="KW-0862">Zinc</keyword>
<organism>
    <name type="scientific">Janthinobacterium sp. (strain Marseille)</name>
    <name type="common">Minibacterium massiliensis</name>
    <dbReference type="NCBI Taxonomy" id="375286"/>
    <lineage>
        <taxon>Bacteria</taxon>
        <taxon>Pseudomonadati</taxon>
        <taxon>Pseudomonadota</taxon>
        <taxon>Betaproteobacteria</taxon>
        <taxon>Burkholderiales</taxon>
        <taxon>Oxalobacteraceae</taxon>
        <taxon>Janthinobacterium</taxon>
    </lineage>
</organism>
<accession>A6T375</accession>
<reference key="1">
    <citation type="journal article" date="2007" name="PLoS Genet.">
        <title>Genome analysis of Minibacterium massiliensis highlights the convergent evolution of water-living bacteria.</title>
        <authorList>
            <person name="Audic S."/>
            <person name="Robert C."/>
            <person name="Campagna B."/>
            <person name="Parinello H."/>
            <person name="Claverie J.-M."/>
            <person name="Raoult D."/>
            <person name="Drancourt M."/>
        </authorList>
    </citation>
    <scope>NUCLEOTIDE SEQUENCE [LARGE SCALE GENOMIC DNA]</scope>
    <source>
        <strain>Marseille</strain>
    </source>
</reference>
<gene>
    <name evidence="1" type="primary">hisI</name>
    <name type="ordered locus">mma_3282</name>
</gene>
<sequence length="134" mass="15367">MSSNAKWLNKVKWDEHGLVPVIAQEVGTNDVLMFAWMNRDALAKTIETGEAIYWSRSRKKLWHKGEESGHTQKVHEVRLDCDEDVVLLKVEQVGKIACHTGRHSCFFQKFEGGAKDGDWETVEPVLKNPETIYK</sequence>
<protein>
    <recommendedName>
        <fullName evidence="1">Phosphoribosyl-AMP cyclohydrolase</fullName>
        <shortName evidence="1">PRA-CH</shortName>
        <ecNumber evidence="1">3.5.4.19</ecNumber>
    </recommendedName>
</protein>